<dbReference type="EMBL" id="AJ508908">
    <property type="protein sequence ID" value="CAD48583.1"/>
    <property type="molecule type" value="Genomic_DNA"/>
</dbReference>
<dbReference type="SMR" id="Q8GB16"/>
<dbReference type="UniPathway" id="UPA00117"/>
<dbReference type="GO" id="GO:0016740">
    <property type="term" value="F:transferase activity"/>
    <property type="evidence" value="ECO:0007669"/>
    <property type="project" value="UniProtKB-KW"/>
</dbReference>
<dbReference type="GO" id="GO:0009437">
    <property type="term" value="P:carnitine metabolic process"/>
    <property type="evidence" value="ECO:0007669"/>
    <property type="project" value="UniProtKB-UniRule"/>
</dbReference>
<dbReference type="CDD" id="cd04745">
    <property type="entry name" value="LbH_paaY_like"/>
    <property type="match status" value="1"/>
</dbReference>
<dbReference type="FunFam" id="2.160.10.10:FF:000012">
    <property type="entry name" value="Carnitine operon protein CaiE"/>
    <property type="match status" value="1"/>
</dbReference>
<dbReference type="Gene3D" id="2.160.10.10">
    <property type="entry name" value="Hexapeptide repeat proteins"/>
    <property type="match status" value="1"/>
</dbReference>
<dbReference type="HAMAP" id="MF_01525">
    <property type="entry name" value="CaiE"/>
    <property type="match status" value="1"/>
</dbReference>
<dbReference type="InterPro" id="IPR023446">
    <property type="entry name" value="CaiE"/>
</dbReference>
<dbReference type="InterPro" id="IPR001451">
    <property type="entry name" value="Hexapep"/>
</dbReference>
<dbReference type="InterPro" id="IPR050484">
    <property type="entry name" value="Transf_Hexapept/Carb_Anhydrase"/>
</dbReference>
<dbReference type="InterPro" id="IPR011004">
    <property type="entry name" value="Trimer_LpxA-like_sf"/>
</dbReference>
<dbReference type="NCBIfam" id="NF010150">
    <property type="entry name" value="PRK13627.1"/>
    <property type="match status" value="1"/>
</dbReference>
<dbReference type="PANTHER" id="PTHR13061">
    <property type="entry name" value="DYNACTIN SUBUNIT P25"/>
    <property type="match status" value="1"/>
</dbReference>
<dbReference type="PANTHER" id="PTHR13061:SF29">
    <property type="entry name" value="GAMMA CARBONIC ANHYDRASE-LIKE 1, MITOCHONDRIAL-RELATED"/>
    <property type="match status" value="1"/>
</dbReference>
<dbReference type="Pfam" id="PF00132">
    <property type="entry name" value="Hexapep"/>
    <property type="match status" value="2"/>
</dbReference>
<dbReference type="SUPFAM" id="SSF51161">
    <property type="entry name" value="Trimeric LpxA-like enzymes"/>
    <property type="match status" value="1"/>
</dbReference>
<comment type="function">
    <text evidence="1">Overproduction of CaiE stimulates the activity of CaiB and CaiD.</text>
</comment>
<comment type="pathway">
    <text evidence="1">Amine and polyamine metabolism; carnitine metabolism.</text>
</comment>
<comment type="similarity">
    <text evidence="1">Belongs to the transferase hexapeptide repeat family.</text>
</comment>
<accession>Q8GB16</accession>
<sequence length="197" mass="21286">MSIYAFEGVIPVVHPTAYIHPSAVLIGDVIIGAGVYIGPLASLRGDYGRLIVEAGANLQDGCVMHGYTDMDTIVQENGHIGHGAILHSCIIGRDSLVGMNSVIMDGAIIGEESIVAAMSFVKAGFQGQARQMLMGSPAKHVRDISDQDMQWKRMNTREYQDLTVRCRQGLVETTPLTAPEANRPRLRGTTEVKPKGQ</sequence>
<protein>
    <recommendedName>
        <fullName evidence="1">Carnitine operon protein CaiE</fullName>
    </recommendedName>
</protein>
<proteinExistence type="inferred from homology"/>
<name>CAIE_PROSL</name>
<feature type="chain" id="PRO_0000068722" description="Carnitine operon protein CaiE">
    <location>
        <begin position="1"/>
        <end position="197"/>
    </location>
</feature>
<feature type="region of interest" description="Disordered" evidence="2">
    <location>
        <begin position="177"/>
        <end position="197"/>
    </location>
</feature>
<feature type="compositionally biased region" description="Basic and acidic residues" evidence="2">
    <location>
        <begin position="188"/>
        <end position="197"/>
    </location>
</feature>
<gene>
    <name evidence="1" type="primary">caiE</name>
</gene>
<organism>
    <name type="scientific">Proteus sp. (strain LE138)</name>
    <dbReference type="NCBI Taxonomy" id="217617"/>
    <lineage>
        <taxon>Bacteria</taxon>
        <taxon>Pseudomonadati</taxon>
        <taxon>Pseudomonadota</taxon>
        <taxon>Gammaproteobacteria</taxon>
        <taxon>Enterobacterales</taxon>
        <taxon>Morganellaceae</taxon>
        <taxon>Proteus</taxon>
    </lineage>
</organism>
<reference key="1">
    <citation type="submission" date="2002-09" db="EMBL/GenBank/DDBJ databases">
        <title>Cai locus and corresponding enzymes of Proteus sp.</title>
        <authorList>
            <person name="Engemann C."/>
            <person name="Elssner T."/>
            <person name="Pfeifer S."/>
            <person name="Krumbholz C."/>
            <person name="Maier T."/>
            <person name="Kleber H.-P."/>
        </authorList>
    </citation>
    <scope>NUCLEOTIDE SEQUENCE [GENOMIC DNA]</scope>
</reference>
<evidence type="ECO:0000255" key="1">
    <source>
        <dbReference type="HAMAP-Rule" id="MF_01525"/>
    </source>
</evidence>
<evidence type="ECO:0000256" key="2">
    <source>
        <dbReference type="SAM" id="MobiDB-lite"/>
    </source>
</evidence>
<keyword id="KW-0677">Repeat</keyword>
<keyword id="KW-0808">Transferase</keyword>